<sequence>MTNVVVVGSQWGDEGKGKIVDWLSERADIVVRFQGGHNAGHTLVIDGVSYKLSLLPSGVVRPGKLAVIGNGVVIDPHALIAEIDKLGKQGVQITPDNLRIADNATLILSLHRELDGFREDAASNSGTKIGTTRRGIGPAYEDKVGRRAIRVMDLADLDTLPAKVDRLLTHHNALRRGLGEAEISHQAIMDELSSVAARVLPFMDTVWLLLDKERRKGARILFEGAQGTLLDIDHGTYPFVTSSNTVAGQAAAGSGMGPGALGYILGITKAYTTRVGEGPFPTELHDEVGQFLGERGHEFGTVTGRKRRCGWFDAALVRQSVAANGITGIALTKLDVLDGLDELKICVGYTLDGQEIDHLPASQAQQASVKPVYITLEGWKESTVGARSWADLPAQAIKYVRQVEELIGAPVALLSTSPERDDTILVTDPFED</sequence>
<reference key="1">
    <citation type="journal article" date="2009" name="Appl. Environ. Microbiol.">
        <title>Rhizobium sp. strain NGR234 possesses a remarkable number of secretion systems.</title>
        <authorList>
            <person name="Schmeisser C."/>
            <person name="Liesegang H."/>
            <person name="Krysciak D."/>
            <person name="Bakkou N."/>
            <person name="Le Quere A."/>
            <person name="Wollherr A."/>
            <person name="Heinemeyer I."/>
            <person name="Morgenstern B."/>
            <person name="Pommerening-Roeser A."/>
            <person name="Flores M."/>
            <person name="Palacios R."/>
            <person name="Brenner S."/>
            <person name="Gottschalk G."/>
            <person name="Schmitz R.A."/>
            <person name="Broughton W.J."/>
            <person name="Perret X."/>
            <person name="Strittmatter A.W."/>
            <person name="Streit W.R."/>
        </authorList>
    </citation>
    <scope>NUCLEOTIDE SEQUENCE [LARGE SCALE GENOMIC DNA]</scope>
    <source>
        <strain>NBRC 101917 / NGR234</strain>
    </source>
</reference>
<gene>
    <name evidence="1" type="primary">purA</name>
    <name type="ordered locus">NGR_c27680</name>
</gene>
<feature type="chain" id="PRO_1000194771" description="Adenylosuccinate synthetase">
    <location>
        <begin position="1"/>
        <end position="432"/>
    </location>
</feature>
<feature type="active site" description="Proton acceptor" evidence="1">
    <location>
        <position position="13"/>
    </location>
</feature>
<feature type="active site" description="Proton donor" evidence="1">
    <location>
        <position position="41"/>
    </location>
</feature>
<feature type="binding site" evidence="1">
    <location>
        <begin position="12"/>
        <end position="18"/>
    </location>
    <ligand>
        <name>GTP</name>
        <dbReference type="ChEBI" id="CHEBI:37565"/>
    </ligand>
</feature>
<feature type="binding site" description="in other chain" evidence="1">
    <location>
        <begin position="13"/>
        <end position="16"/>
    </location>
    <ligand>
        <name>IMP</name>
        <dbReference type="ChEBI" id="CHEBI:58053"/>
        <note>ligand shared between dimeric partners</note>
    </ligand>
</feature>
<feature type="binding site" evidence="1">
    <location>
        <position position="13"/>
    </location>
    <ligand>
        <name>Mg(2+)</name>
        <dbReference type="ChEBI" id="CHEBI:18420"/>
    </ligand>
</feature>
<feature type="binding site" description="in other chain" evidence="1">
    <location>
        <begin position="38"/>
        <end position="41"/>
    </location>
    <ligand>
        <name>IMP</name>
        <dbReference type="ChEBI" id="CHEBI:58053"/>
        <note>ligand shared between dimeric partners</note>
    </ligand>
</feature>
<feature type="binding site" evidence="1">
    <location>
        <begin position="40"/>
        <end position="42"/>
    </location>
    <ligand>
        <name>GTP</name>
        <dbReference type="ChEBI" id="CHEBI:37565"/>
    </ligand>
</feature>
<feature type="binding site" evidence="1">
    <location>
        <position position="40"/>
    </location>
    <ligand>
        <name>Mg(2+)</name>
        <dbReference type="ChEBI" id="CHEBI:18420"/>
    </ligand>
</feature>
<feature type="binding site" description="in other chain" evidence="1">
    <location>
        <position position="132"/>
    </location>
    <ligand>
        <name>IMP</name>
        <dbReference type="ChEBI" id="CHEBI:58053"/>
        <note>ligand shared between dimeric partners</note>
    </ligand>
</feature>
<feature type="binding site" evidence="1">
    <location>
        <position position="146"/>
    </location>
    <ligand>
        <name>IMP</name>
        <dbReference type="ChEBI" id="CHEBI:58053"/>
        <note>ligand shared between dimeric partners</note>
    </ligand>
</feature>
<feature type="binding site" description="in other chain" evidence="1">
    <location>
        <position position="226"/>
    </location>
    <ligand>
        <name>IMP</name>
        <dbReference type="ChEBI" id="CHEBI:58053"/>
        <note>ligand shared between dimeric partners</note>
    </ligand>
</feature>
<feature type="binding site" description="in other chain" evidence="1">
    <location>
        <position position="241"/>
    </location>
    <ligand>
        <name>IMP</name>
        <dbReference type="ChEBI" id="CHEBI:58053"/>
        <note>ligand shared between dimeric partners</note>
    </ligand>
</feature>
<feature type="binding site" evidence="1">
    <location>
        <begin position="301"/>
        <end position="307"/>
    </location>
    <ligand>
        <name>substrate</name>
    </ligand>
</feature>
<feature type="binding site" description="in other chain" evidence="1">
    <location>
        <position position="305"/>
    </location>
    <ligand>
        <name>IMP</name>
        <dbReference type="ChEBI" id="CHEBI:58053"/>
        <note>ligand shared between dimeric partners</note>
    </ligand>
</feature>
<feature type="binding site" evidence="1">
    <location>
        <position position="307"/>
    </location>
    <ligand>
        <name>GTP</name>
        <dbReference type="ChEBI" id="CHEBI:37565"/>
    </ligand>
</feature>
<feature type="binding site" evidence="1">
    <location>
        <begin position="333"/>
        <end position="335"/>
    </location>
    <ligand>
        <name>GTP</name>
        <dbReference type="ChEBI" id="CHEBI:37565"/>
    </ligand>
</feature>
<feature type="binding site" evidence="1">
    <location>
        <begin position="415"/>
        <end position="417"/>
    </location>
    <ligand>
        <name>GTP</name>
        <dbReference type="ChEBI" id="CHEBI:37565"/>
    </ligand>
</feature>
<protein>
    <recommendedName>
        <fullName evidence="1">Adenylosuccinate synthetase</fullName>
        <shortName evidence="1">AMPSase</shortName>
        <shortName evidence="1">AdSS</shortName>
        <ecNumber evidence="1">6.3.4.4</ecNumber>
    </recommendedName>
    <alternativeName>
        <fullName evidence="1">IMP--aspartate ligase</fullName>
    </alternativeName>
</protein>
<name>PURA_SINFN</name>
<dbReference type="EC" id="6.3.4.4" evidence="1"/>
<dbReference type="EMBL" id="CP001389">
    <property type="protein sequence ID" value="ACP26516.1"/>
    <property type="molecule type" value="Genomic_DNA"/>
</dbReference>
<dbReference type="RefSeq" id="WP_012709272.1">
    <property type="nucleotide sequence ID" value="NC_012587.1"/>
</dbReference>
<dbReference type="RefSeq" id="YP_002827269.1">
    <property type="nucleotide sequence ID" value="NC_012587.1"/>
</dbReference>
<dbReference type="SMR" id="C3MI14"/>
<dbReference type="STRING" id="394.NGR_c27680"/>
<dbReference type="KEGG" id="rhi:NGR_c27680"/>
<dbReference type="PATRIC" id="fig|394.7.peg.5601"/>
<dbReference type="eggNOG" id="COG0104">
    <property type="taxonomic scope" value="Bacteria"/>
</dbReference>
<dbReference type="HOGENOM" id="CLU_029848_0_0_5"/>
<dbReference type="OrthoDB" id="9807553at2"/>
<dbReference type="UniPathway" id="UPA00075">
    <property type="reaction ID" value="UER00335"/>
</dbReference>
<dbReference type="Proteomes" id="UP000001054">
    <property type="component" value="Chromosome"/>
</dbReference>
<dbReference type="GO" id="GO:0005737">
    <property type="term" value="C:cytoplasm"/>
    <property type="evidence" value="ECO:0007669"/>
    <property type="project" value="UniProtKB-SubCell"/>
</dbReference>
<dbReference type="GO" id="GO:0004019">
    <property type="term" value="F:adenylosuccinate synthase activity"/>
    <property type="evidence" value="ECO:0007669"/>
    <property type="project" value="UniProtKB-UniRule"/>
</dbReference>
<dbReference type="GO" id="GO:0005525">
    <property type="term" value="F:GTP binding"/>
    <property type="evidence" value="ECO:0007669"/>
    <property type="project" value="UniProtKB-UniRule"/>
</dbReference>
<dbReference type="GO" id="GO:0000287">
    <property type="term" value="F:magnesium ion binding"/>
    <property type="evidence" value="ECO:0007669"/>
    <property type="project" value="UniProtKB-UniRule"/>
</dbReference>
<dbReference type="GO" id="GO:0044208">
    <property type="term" value="P:'de novo' AMP biosynthetic process"/>
    <property type="evidence" value="ECO:0007669"/>
    <property type="project" value="UniProtKB-UniRule"/>
</dbReference>
<dbReference type="GO" id="GO:0046040">
    <property type="term" value="P:IMP metabolic process"/>
    <property type="evidence" value="ECO:0007669"/>
    <property type="project" value="TreeGrafter"/>
</dbReference>
<dbReference type="CDD" id="cd03108">
    <property type="entry name" value="AdSS"/>
    <property type="match status" value="1"/>
</dbReference>
<dbReference type="FunFam" id="1.10.300.10:FF:000001">
    <property type="entry name" value="Adenylosuccinate synthetase"/>
    <property type="match status" value="1"/>
</dbReference>
<dbReference type="FunFam" id="3.90.170.10:FF:000001">
    <property type="entry name" value="Adenylosuccinate synthetase"/>
    <property type="match status" value="1"/>
</dbReference>
<dbReference type="Gene3D" id="3.40.440.10">
    <property type="entry name" value="Adenylosuccinate Synthetase, subunit A, domain 1"/>
    <property type="match status" value="1"/>
</dbReference>
<dbReference type="Gene3D" id="1.10.300.10">
    <property type="entry name" value="Adenylosuccinate Synthetase, subunit A, domain 2"/>
    <property type="match status" value="1"/>
</dbReference>
<dbReference type="Gene3D" id="3.90.170.10">
    <property type="entry name" value="Adenylosuccinate Synthetase, subunit A, domain 3"/>
    <property type="match status" value="1"/>
</dbReference>
<dbReference type="HAMAP" id="MF_00011">
    <property type="entry name" value="Adenylosucc_synth"/>
    <property type="match status" value="1"/>
</dbReference>
<dbReference type="InterPro" id="IPR018220">
    <property type="entry name" value="Adenylosuccin_syn_GTP-bd"/>
</dbReference>
<dbReference type="InterPro" id="IPR033128">
    <property type="entry name" value="Adenylosuccin_syn_Lys_AS"/>
</dbReference>
<dbReference type="InterPro" id="IPR042109">
    <property type="entry name" value="Adenylosuccinate_synth_dom1"/>
</dbReference>
<dbReference type="InterPro" id="IPR042110">
    <property type="entry name" value="Adenylosuccinate_synth_dom2"/>
</dbReference>
<dbReference type="InterPro" id="IPR042111">
    <property type="entry name" value="Adenylosuccinate_synth_dom3"/>
</dbReference>
<dbReference type="InterPro" id="IPR001114">
    <property type="entry name" value="Adenylosuccinate_synthetase"/>
</dbReference>
<dbReference type="InterPro" id="IPR027417">
    <property type="entry name" value="P-loop_NTPase"/>
</dbReference>
<dbReference type="NCBIfam" id="NF002223">
    <property type="entry name" value="PRK01117.1"/>
    <property type="match status" value="1"/>
</dbReference>
<dbReference type="NCBIfam" id="TIGR00184">
    <property type="entry name" value="purA"/>
    <property type="match status" value="1"/>
</dbReference>
<dbReference type="PANTHER" id="PTHR11846">
    <property type="entry name" value="ADENYLOSUCCINATE SYNTHETASE"/>
    <property type="match status" value="1"/>
</dbReference>
<dbReference type="PANTHER" id="PTHR11846:SF0">
    <property type="entry name" value="ADENYLOSUCCINATE SYNTHETASE"/>
    <property type="match status" value="1"/>
</dbReference>
<dbReference type="Pfam" id="PF00709">
    <property type="entry name" value="Adenylsucc_synt"/>
    <property type="match status" value="1"/>
</dbReference>
<dbReference type="SMART" id="SM00788">
    <property type="entry name" value="Adenylsucc_synt"/>
    <property type="match status" value="1"/>
</dbReference>
<dbReference type="SUPFAM" id="SSF52540">
    <property type="entry name" value="P-loop containing nucleoside triphosphate hydrolases"/>
    <property type="match status" value="1"/>
</dbReference>
<dbReference type="PROSITE" id="PS01266">
    <property type="entry name" value="ADENYLOSUCCIN_SYN_1"/>
    <property type="match status" value="1"/>
</dbReference>
<dbReference type="PROSITE" id="PS00513">
    <property type="entry name" value="ADENYLOSUCCIN_SYN_2"/>
    <property type="match status" value="1"/>
</dbReference>
<accession>C3MI14</accession>
<organism>
    <name type="scientific">Sinorhizobium fredii (strain NBRC 101917 / NGR234)</name>
    <dbReference type="NCBI Taxonomy" id="394"/>
    <lineage>
        <taxon>Bacteria</taxon>
        <taxon>Pseudomonadati</taxon>
        <taxon>Pseudomonadota</taxon>
        <taxon>Alphaproteobacteria</taxon>
        <taxon>Hyphomicrobiales</taxon>
        <taxon>Rhizobiaceae</taxon>
        <taxon>Sinorhizobium/Ensifer group</taxon>
        <taxon>Sinorhizobium</taxon>
    </lineage>
</organism>
<comment type="function">
    <text evidence="1">Plays an important role in the de novo pathway of purine nucleotide biosynthesis. Catalyzes the first committed step in the biosynthesis of AMP from IMP.</text>
</comment>
<comment type="catalytic activity">
    <reaction evidence="1">
        <text>IMP + L-aspartate + GTP = N(6)-(1,2-dicarboxyethyl)-AMP + GDP + phosphate + 2 H(+)</text>
        <dbReference type="Rhea" id="RHEA:15753"/>
        <dbReference type="ChEBI" id="CHEBI:15378"/>
        <dbReference type="ChEBI" id="CHEBI:29991"/>
        <dbReference type="ChEBI" id="CHEBI:37565"/>
        <dbReference type="ChEBI" id="CHEBI:43474"/>
        <dbReference type="ChEBI" id="CHEBI:57567"/>
        <dbReference type="ChEBI" id="CHEBI:58053"/>
        <dbReference type="ChEBI" id="CHEBI:58189"/>
        <dbReference type="EC" id="6.3.4.4"/>
    </reaction>
</comment>
<comment type="cofactor">
    <cofactor evidence="1">
        <name>Mg(2+)</name>
        <dbReference type="ChEBI" id="CHEBI:18420"/>
    </cofactor>
    <text evidence="1">Binds 1 Mg(2+) ion per subunit.</text>
</comment>
<comment type="pathway">
    <text evidence="1">Purine metabolism; AMP biosynthesis via de novo pathway; AMP from IMP: step 1/2.</text>
</comment>
<comment type="subunit">
    <text evidence="1">Homodimer.</text>
</comment>
<comment type="subcellular location">
    <subcellularLocation>
        <location evidence="1">Cytoplasm</location>
    </subcellularLocation>
</comment>
<comment type="similarity">
    <text evidence="1">Belongs to the adenylosuccinate synthetase family.</text>
</comment>
<keyword id="KW-0963">Cytoplasm</keyword>
<keyword id="KW-0342">GTP-binding</keyword>
<keyword id="KW-0436">Ligase</keyword>
<keyword id="KW-0460">Magnesium</keyword>
<keyword id="KW-0479">Metal-binding</keyword>
<keyword id="KW-0547">Nucleotide-binding</keyword>
<keyword id="KW-0658">Purine biosynthesis</keyword>
<keyword id="KW-1185">Reference proteome</keyword>
<evidence type="ECO:0000255" key="1">
    <source>
        <dbReference type="HAMAP-Rule" id="MF_00011"/>
    </source>
</evidence>
<proteinExistence type="inferred from homology"/>